<comment type="catalytic activity">
    <reaction>
        <text>dTDP-alpha-D-glucose = dTDP-4-dehydro-6-deoxy-alpha-D-glucose + H2O</text>
        <dbReference type="Rhea" id="RHEA:17221"/>
        <dbReference type="ChEBI" id="CHEBI:15377"/>
        <dbReference type="ChEBI" id="CHEBI:57477"/>
        <dbReference type="ChEBI" id="CHEBI:57649"/>
        <dbReference type="EC" id="4.2.1.46"/>
    </reaction>
</comment>
<comment type="cofactor">
    <cofactor evidence="1">
        <name>NAD(+)</name>
        <dbReference type="ChEBI" id="CHEBI:57540"/>
    </cofactor>
</comment>
<comment type="interaction">
    <interactant intactId="EBI-1761487">
        <id>O95455</id>
    </interactant>
    <interactant intactId="EBI-466029">
        <id>P42858</id>
        <label>HTT</label>
    </interactant>
    <organismsDiffer>false</organismsDiffer>
    <experiments>3</experiments>
</comment>
<comment type="disease" evidence="2">
    <disease id="DI-04301">
        <name>Catel-Manzke syndrome</name>
        <acronym>CATMANS</acronym>
        <description>A syndrome characterized by Pierre Robin sequence and a unique form of bilateral hyperphalangy causing a clinodactyly of the index finger. Pierre Robin sequence includes an opening in the roof of the mouth (a cleft palate), a large tongue (macroglossia), and a small lower jaw (micrognathia).</description>
        <dbReference type="MIM" id="616145"/>
    </disease>
    <text>The disease is caused by variants affecting the gene represented in this entry.</text>
</comment>
<comment type="similarity">
    <text evidence="3">Belongs to the NAD(P)-dependent epimerase/dehydratase family. dTDP-glucose dehydratase subfamily.</text>
</comment>
<comment type="sequence caution" evidence="3">
    <conflict type="miscellaneous discrepancy">
        <sequence resource="EMBL-CDS" id="AAH05284"/>
    </conflict>
    <text>Contaminating sequence. Potential poly-A sequence.</text>
</comment>
<name>TGDS_HUMAN</name>
<gene>
    <name type="primary">TGDS</name>
</gene>
<feature type="chain" id="PRO_0000183250" description="dTDP-D-glucose 4,6-dehydratase">
    <location>
        <begin position="1"/>
        <end position="350"/>
    </location>
</feature>
<feature type="active site" description="Proton donor" evidence="1">
    <location>
        <position position="143"/>
    </location>
</feature>
<feature type="active site" description="Proton acceptor" evidence="1">
    <location>
        <position position="144"/>
    </location>
</feature>
<feature type="active site" description="Proton acceptor" evidence="1">
    <location>
        <position position="166"/>
    </location>
</feature>
<feature type="binding site" evidence="1">
    <location>
        <position position="142"/>
    </location>
    <ligand>
        <name>substrate</name>
    </ligand>
</feature>
<feature type="sequence variant" id="VAR_049122" description="In dbSNP:rs34991132.">
    <original>G</original>
    <variation>S</variation>
    <location>
        <position position="15"/>
    </location>
</feature>
<feature type="sequence variant" id="VAR_072682" description="In CATMANS; dbSNP:rs724160004." evidence="2">
    <original>E</original>
    <variation>G</variation>
    <location>
        <position position="90"/>
    </location>
</feature>
<feature type="sequence variant" id="VAR_072683" description="In CATMANS; dbSNP:rs727502808." evidence="2">
    <original>F</original>
    <variation>L</variation>
    <location>
        <position position="98"/>
    </location>
</feature>
<feature type="sequence variant" id="VAR_072684" description="In CATMANS; dbSNP:rs140430952." evidence="2">
    <original>A</original>
    <variation>S</variation>
    <location>
        <position position="100"/>
    </location>
</feature>
<feature type="sequence variant" id="VAR_072685" description="In CATMANS; dbSNP:rs544436734." evidence="2">
    <original>Y</original>
    <variation>H</variation>
    <location>
        <position position="234"/>
    </location>
</feature>
<feature type="sequence variant" id="VAR_072686" description="In CATMANS; dbSNP:rs724160005." evidence="2">
    <original>N</original>
    <variation>D</variation>
    <location>
        <position position="298"/>
    </location>
</feature>
<sequence>MSAACWEEPWGLPGGFAKRVLVTGGAGFIASHMIVSLVEDYPNYMIINLDKLDYCASLKNLETISNKQNYKFIQGDICDSHFVKLLFETEKIDIVLHFAAQTHVDLSFVRAFEFTYVNVYGTHVLVSAAHEARVEKFIYVSTDEVYGGSLDKEFDESSPKQPTNPYASSKAAAECFVQSYWEQYKFPVVITRSSNVYGPHQYPEKVIPKFISLLQHNRKCCIHGSGLQTRNFLYATDVVEAFLTVLKKGKPGEIYNIGTNFEMSVVQLAKELIQLIKETNSESEMENWVDYVNDRPTNDMRYPMKSEKIHGLGWRPKVPWKEGIKKTIEWYRENFHNWKNVEKALEPFPV</sequence>
<proteinExistence type="evidence at protein level"/>
<protein>
    <recommendedName>
        <fullName>dTDP-D-glucose 4,6-dehydratase</fullName>
        <ecNumber>4.2.1.46</ecNumber>
    </recommendedName>
</protein>
<evidence type="ECO:0000250" key="1"/>
<evidence type="ECO:0000269" key="2">
    <source>
    </source>
</evidence>
<evidence type="ECO:0000305" key="3"/>
<dbReference type="EC" id="4.2.1.46"/>
<dbReference type="EMBL" id="AJ006068">
    <property type="protein sequence ID" value="CAA06840.1"/>
    <property type="molecule type" value="mRNA"/>
</dbReference>
<dbReference type="EMBL" id="AF048686">
    <property type="protein sequence ID" value="AAD50061.1"/>
    <property type="molecule type" value="mRNA"/>
</dbReference>
<dbReference type="EMBL" id="AK313251">
    <property type="protein sequence ID" value="BAG36061.1"/>
    <property type="molecule type" value="mRNA"/>
</dbReference>
<dbReference type="EMBL" id="AY544125">
    <property type="protein sequence ID" value="AAT11156.1"/>
    <property type="molecule type" value="mRNA"/>
</dbReference>
<dbReference type="EMBL" id="AL139318">
    <property type="status" value="NOT_ANNOTATED_CDS"/>
    <property type="molecule type" value="Genomic_DNA"/>
</dbReference>
<dbReference type="EMBL" id="AL359708">
    <property type="status" value="NOT_ANNOTATED_CDS"/>
    <property type="molecule type" value="Genomic_DNA"/>
</dbReference>
<dbReference type="EMBL" id="CH471085">
    <property type="protein sequence ID" value="EAX08940.1"/>
    <property type="molecule type" value="Genomic_DNA"/>
</dbReference>
<dbReference type="EMBL" id="CH471085">
    <property type="protein sequence ID" value="EAX08941.1"/>
    <property type="molecule type" value="Genomic_DNA"/>
</dbReference>
<dbReference type="EMBL" id="BC005284">
    <property type="protein sequence ID" value="AAH05284.1"/>
    <property type="status" value="ALT_SEQ"/>
    <property type="molecule type" value="mRNA"/>
</dbReference>
<dbReference type="EMBL" id="BC033675">
    <property type="protein sequence ID" value="AAH33675.1"/>
    <property type="molecule type" value="mRNA"/>
</dbReference>
<dbReference type="CCDS" id="CCDS9471.1"/>
<dbReference type="RefSeq" id="NP_001291359.1">
    <property type="nucleotide sequence ID" value="NM_001304430.1"/>
</dbReference>
<dbReference type="RefSeq" id="NP_055120.1">
    <property type="nucleotide sequence ID" value="NM_014305.4"/>
</dbReference>
<dbReference type="SMR" id="O95455"/>
<dbReference type="BioGRID" id="117041">
    <property type="interactions" value="8"/>
</dbReference>
<dbReference type="FunCoup" id="O95455">
    <property type="interactions" value="235"/>
</dbReference>
<dbReference type="IntAct" id="O95455">
    <property type="interactions" value="9"/>
</dbReference>
<dbReference type="STRING" id="9606.ENSP00000261296"/>
<dbReference type="iPTMnet" id="O95455"/>
<dbReference type="PhosphoSitePlus" id="O95455"/>
<dbReference type="BioMuta" id="TGDS"/>
<dbReference type="jPOST" id="O95455"/>
<dbReference type="MassIVE" id="O95455"/>
<dbReference type="PaxDb" id="9606-ENSP00000261296"/>
<dbReference type="PeptideAtlas" id="O95455"/>
<dbReference type="ProteomicsDB" id="50889"/>
<dbReference type="Pumba" id="O95455"/>
<dbReference type="Antibodypedia" id="24784">
    <property type="antibodies" value="101 antibodies from 18 providers"/>
</dbReference>
<dbReference type="DNASU" id="23483"/>
<dbReference type="Ensembl" id="ENST00000261296.7">
    <property type="protein sequence ID" value="ENSP00000261296.5"/>
    <property type="gene ID" value="ENSG00000088451.11"/>
</dbReference>
<dbReference type="GeneID" id="23483"/>
<dbReference type="KEGG" id="hsa:23483"/>
<dbReference type="MANE-Select" id="ENST00000261296.7">
    <property type="protein sequence ID" value="ENSP00000261296.5"/>
    <property type="RefSeq nucleotide sequence ID" value="NM_014305.4"/>
    <property type="RefSeq protein sequence ID" value="NP_055120.1"/>
</dbReference>
<dbReference type="UCSC" id="uc001vlw.4">
    <property type="organism name" value="human"/>
</dbReference>
<dbReference type="AGR" id="HGNC:20324"/>
<dbReference type="CTD" id="23483"/>
<dbReference type="DisGeNET" id="23483"/>
<dbReference type="GeneCards" id="TGDS"/>
<dbReference type="HGNC" id="HGNC:20324">
    <property type="gene designation" value="TGDS"/>
</dbReference>
<dbReference type="HPA" id="ENSG00000088451">
    <property type="expression patterns" value="Low tissue specificity"/>
</dbReference>
<dbReference type="MalaCards" id="TGDS"/>
<dbReference type="MIM" id="616145">
    <property type="type" value="phenotype"/>
</dbReference>
<dbReference type="MIM" id="616146">
    <property type="type" value="gene"/>
</dbReference>
<dbReference type="neXtProt" id="NX_O95455"/>
<dbReference type="OpenTargets" id="ENSG00000088451"/>
<dbReference type="Orphanet" id="1388">
    <property type="disease" value="Catel-Manzke syndrome"/>
</dbReference>
<dbReference type="PharmGKB" id="PA128395791"/>
<dbReference type="VEuPathDB" id="HostDB:ENSG00000088451"/>
<dbReference type="eggNOG" id="KOG0747">
    <property type="taxonomic scope" value="Eukaryota"/>
</dbReference>
<dbReference type="GeneTree" id="ENSGT00940000159196"/>
<dbReference type="HOGENOM" id="CLU_007383_1_14_1"/>
<dbReference type="InParanoid" id="O95455"/>
<dbReference type="OMA" id="KLIPLMC"/>
<dbReference type="OrthoDB" id="16464at2759"/>
<dbReference type="PAN-GO" id="O95455">
    <property type="GO annotations" value="1 GO annotation based on evolutionary models"/>
</dbReference>
<dbReference type="PhylomeDB" id="O95455"/>
<dbReference type="TreeFam" id="TF313892"/>
<dbReference type="PathwayCommons" id="O95455"/>
<dbReference type="SignaLink" id="O95455"/>
<dbReference type="BioGRID-ORCS" id="23483">
    <property type="hits" value="15 hits in 1157 CRISPR screens"/>
</dbReference>
<dbReference type="ChiTaRS" id="TGDS">
    <property type="organism name" value="human"/>
</dbReference>
<dbReference type="GenomeRNAi" id="23483"/>
<dbReference type="Pharos" id="O95455">
    <property type="development level" value="Tbio"/>
</dbReference>
<dbReference type="PRO" id="PR:O95455"/>
<dbReference type="Proteomes" id="UP000005640">
    <property type="component" value="Chromosome 13"/>
</dbReference>
<dbReference type="RNAct" id="O95455">
    <property type="molecule type" value="protein"/>
</dbReference>
<dbReference type="Bgee" id="ENSG00000088451">
    <property type="expression patterns" value="Expressed in male germ line stem cell (sensu Vertebrata) in testis and 185 other cell types or tissues"/>
</dbReference>
<dbReference type="GO" id="GO:0008460">
    <property type="term" value="F:dTDP-glucose 4,6-dehydratase activity"/>
    <property type="evidence" value="ECO:0000318"/>
    <property type="project" value="GO_Central"/>
</dbReference>
<dbReference type="GO" id="GO:0009225">
    <property type="term" value="P:nucleotide-sugar metabolic process"/>
    <property type="evidence" value="ECO:0007669"/>
    <property type="project" value="InterPro"/>
</dbReference>
<dbReference type="CDD" id="cd05246">
    <property type="entry name" value="dTDP_GD_SDR_e"/>
    <property type="match status" value="1"/>
</dbReference>
<dbReference type="FunFam" id="3.40.50.720:FF:000304">
    <property type="entry name" value="UDP-glucose 4,6-dehydratase"/>
    <property type="match status" value="1"/>
</dbReference>
<dbReference type="Gene3D" id="3.40.50.720">
    <property type="entry name" value="NAD(P)-binding Rossmann-like Domain"/>
    <property type="match status" value="1"/>
</dbReference>
<dbReference type="Gene3D" id="3.90.25.10">
    <property type="entry name" value="UDP-galactose 4-epimerase, domain 1"/>
    <property type="match status" value="1"/>
</dbReference>
<dbReference type="InterPro" id="IPR005888">
    <property type="entry name" value="dTDP_Gluc_deHydtase"/>
</dbReference>
<dbReference type="InterPro" id="IPR016040">
    <property type="entry name" value="NAD(P)-bd_dom"/>
</dbReference>
<dbReference type="InterPro" id="IPR036291">
    <property type="entry name" value="NAD(P)-bd_dom_sf"/>
</dbReference>
<dbReference type="PANTHER" id="PTHR43000">
    <property type="entry name" value="DTDP-D-GLUCOSE 4,6-DEHYDRATASE-RELATED"/>
    <property type="match status" value="1"/>
</dbReference>
<dbReference type="Pfam" id="PF16363">
    <property type="entry name" value="GDP_Man_Dehyd"/>
    <property type="match status" value="1"/>
</dbReference>
<dbReference type="SUPFAM" id="SSF51735">
    <property type="entry name" value="NAD(P)-binding Rossmann-fold domains"/>
    <property type="match status" value="1"/>
</dbReference>
<keyword id="KW-0225">Disease variant</keyword>
<keyword id="KW-0456">Lyase</keyword>
<keyword id="KW-0520">NAD</keyword>
<keyword id="KW-1267">Proteomics identification</keyword>
<keyword id="KW-1185">Reference proteome</keyword>
<accession>O95455</accession>
<accession>Q05DQ3</accession>
<accession>Q2TU31</accession>
<accession>Q5T3Z2</accession>
<accession>Q9H1T9</accession>
<organism>
    <name type="scientific">Homo sapiens</name>
    <name type="common">Human</name>
    <dbReference type="NCBI Taxonomy" id="9606"/>
    <lineage>
        <taxon>Eukaryota</taxon>
        <taxon>Metazoa</taxon>
        <taxon>Chordata</taxon>
        <taxon>Craniata</taxon>
        <taxon>Vertebrata</taxon>
        <taxon>Euteleostomi</taxon>
        <taxon>Mammalia</taxon>
        <taxon>Eutheria</taxon>
        <taxon>Euarchontoglires</taxon>
        <taxon>Primates</taxon>
        <taxon>Haplorrhini</taxon>
        <taxon>Catarrhini</taxon>
        <taxon>Hominidae</taxon>
        <taxon>Homo</taxon>
    </lineage>
</organism>
<reference key="1">
    <citation type="submission" date="1998-05" db="EMBL/GenBank/DDBJ databases">
        <title>Identification of dTDP-D-glucose 4,6 dehydratase in human cells.</title>
        <authorList>
            <person name="Sturla L."/>
            <person name="Bisso A."/>
            <person name="Zanardi D."/>
            <person name="De Flora A."/>
            <person name="Tonetti M."/>
        </authorList>
    </citation>
    <scope>NUCLEOTIDE SEQUENCE [MRNA]</scope>
</reference>
<reference key="2">
    <citation type="submission" date="1998-02" db="EMBL/GenBank/DDBJ databases">
        <title>Similar to Haemophilus influenzae dTDP-glucose 4,6-dehydratase.</title>
        <authorList>
            <person name="Seppala R."/>
            <person name="Lehto V.-P."/>
            <person name="Gahl W.A."/>
        </authorList>
    </citation>
    <scope>NUCLEOTIDE SEQUENCE [MRNA]</scope>
</reference>
<reference key="3">
    <citation type="journal article" date="2004" name="Nat. Genet.">
        <title>Complete sequencing and characterization of 21,243 full-length human cDNAs.</title>
        <authorList>
            <person name="Ota T."/>
            <person name="Suzuki Y."/>
            <person name="Nishikawa T."/>
            <person name="Otsuki T."/>
            <person name="Sugiyama T."/>
            <person name="Irie R."/>
            <person name="Wakamatsu A."/>
            <person name="Hayashi K."/>
            <person name="Sato H."/>
            <person name="Nagai K."/>
            <person name="Kimura K."/>
            <person name="Makita H."/>
            <person name="Sekine M."/>
            <person name="Obayashi M."/>
            <person name="Nishi T."/>
            <person name="Shibahara T."/>
            <person name="Tanaka T."/>
            <person name="Ishii S."/>
            <person name="Yamamoto J."/>
            <person name="Saito K."/>
            <person name="Kawai Y."/>
            <person name="Isono Y."/>
            <person name="Nakamura Y."/>
            <person name="Nagahari K."/>
            <person name="Murakami K."/>
            <person name="Yasuda T."/>
            <person name="Iwayanagi T."/>
            <person name="Wagatsuma M."/>
            <person name="Shiratori A."/>
            <person name="Sudo H."/>
            <person name="Hosoiri T."/>
            <person name="Kaku Y."/>
            <person name="Kodaira H."/>
            <person name="Kondo H."/>
            <person name="Sugawara M."/>
            <person name="Takahashi M."/>
            <person name="Kanda K."/>
            <person name="Yokoi T."/>
            <person name="Furuya T."/>
            <person name="Kikkawa E."/>
            <person name="Omura Y."/>
            <person name="Abe K."/>
            <person name="Kamihara K."/>
            <person name="Katsuta N."/>
            <person name="Sato K."/>
            <person name="Tanikawa M."/>
            <person name="Yamazaki M."/>
            <person name="Ninomiya K."/>
            <person name="Ishibashi T."/>
            <person name="Yamashita H."/>
            <person name="Murakawa K."/>
            <person name="Fujimori K."/>
            <person name="Tanai H."/>
            <person name="Kimata M."/>
            <person name="Watanabe M."/>
            <person name="Hiraoka S."/>
            <person name="Chiba Y."/>
            <person name="Ishida S."/>
            <person name="Ono Y."/>
            <person name="Takiguchi S."/>
            <person name="Watanabe S."/>
            <person name="Yosida M."/>
            <person name="Hotuta T."/>
            <person name="Kusano J."/>
            <person name="Kanehori K."/>
            <person name="Takahashi-Fujii A."/>
            <person name="Hara H."/>
            <person name="Tanase T.-O."/>
            <person name="Nomura Y."/>
            <person name="Togiya S."/>
            <person name="Komai F."/>
            <person name="Hara R."/>
            <person name="Takeuchi K."/>
            <person name="Arita M."/>
            <person name="Imose N."/>
            <person name="Musashino K."/>
            <person name="Yuuki H."/>
            <person name="Oshima A."/>
            <person name="Sasaki N."/>
            <person name="Aotsuka S."/>
            <person name="Yoshikawa Y."/>
            <person name="Matsunawa H."/>
            <person name="Ichihara T."/>
            <person name="Shiohata N."/>
            <person name="Sano S."/>
            <person name="Moriya S."/>
            <person name="Momiyama H."/>
            <person name="Satoh N."/>
            <person name="Takami S."/>
            <person name="Terashima Y."/>
            <person name="Suzuki O."/>
            <person name="Nakagawa S."/>
            <person name="Senoh A."/>
            <person name="Mizoguchi H."/>
            <person name="Goto Y."/>
            <person name="Shimizu F."/>
            <person name="Wakebe H."/>
            <person name="Hishigaki H."/>
            <person name="Watanabe T."/>
            <person name="Sugiyama A."/>
            <person name="Takemoto M."/>
            <person name="Kawakami B."/>
            <person name="Yamazaki M."/>
            <person name="Watanabe K."/>
            <person name="Kumagai A."/>
            <person name="Itakura S."/>
            <person name="Fukuzumi Y."/>
            <person name="Fujimori Y."/>
            <person name="Komiyama M."/>
            <person name="Tashiro H."/>
            <person name="Tanigami A."/>
            <person name="Fujiwara T."/>
            <person name="Ono T."/>
            <person name="Yamada K."/>
            <person name="Fujii Y."/>
            <person name="Ozaki K."/>
            <person name="Hirao M."/>
            <person name="Ohmori Y."/>
            <person name="Kawabata A."/>
            <person name="Hikiji T."/>
            <person name="Kobatake N."/>
            <person name="Inagaki H."/>
            <person name="Ikema Y."/>
            <person name="Okamoto S."/>
            <person name="Okitani R."/>
            <person name="Kawakami T."/>
            <person name="Noguchi S."/>
            <person name="Itoh T."/>
            <person name="Shigeta K."/>
            <person name="Senba T."/>
            <person name="Matsumura K."/>
            <person name="Nakajima Y."/>
            <person name="Mizuno T."/>
            <person name="Morinaga M."/>
            <person name="Sasaki M."/>
            <person name="Togashi T."/>
            <person name="Oyama M."/>
            <person name="Hata H."/>
            <person name="Watanabe M."/>
            <person name="Komatsu T."/>
            <person name="Mizushima-Sugano J."/>
            <person name="Satoh T."/>
            <person name="Shirai Y."/>
            <person name="Takahashi Y."/>
            <person name="Nakagawa K."/>
            <person name="Okumura K."/>
            <person name="Nagase T."/>
            <person name="Nomura N."/>
            <person name="Kikuchi H."/>
            <person name="Masuho Y."/>
            <person name="Yamashita R."/>
            <person name="Nakai K."/>
            <person name="Yada T."/>
            <person name="Nakamura Y."/>
            <person name="Ohara O."/>
            <person name="Isogai T."/>
            <person name="Sugano S."/>
        </authorList>
    </citation>
    <scope>NUCLEOTIDE SEQUENCE [LARGE SCALE MRNA]</scope>
    <source>
        <tissue>Pericardium</tissue>
    </source>
</reference>
<reference key="4">
    <citation type="submission" date="2004-02" db="EMBL/GenBank/DDBJ databases">
        <title>Identification of a human cell growth inhibition gene.</title>
        <authorList>
            <person name="Kim J.W."/>
        </authorList>
    </citation>
    <scope>NUCLEOTIDE SEQUENCE [LARGE SCALE MRNA]</scope>
</reference>
<reference key="5">
    <citation type="journal article" date="2004" name="Nature">
        <title>The DNA sequence and analysis of human chromosome 13.</title>
        <authorList>
            <person name="Dunham A."/>
            <person name="Matthews L.H."/>
            <person name="Burton J."/>
            <person name="Ashurst J.L."/>
            <person name="Howe K.L."/>
            <person name="Ashcroft K.J."/>
            <person name="Beare D.M."/>
            <person name="Burford D.C."/>
            <person name="Hunt S.E."/>
            <person name="Griffiths-Jones S."/>
            <person name="Jones M.C."/>
            <person name="Keenan S.J."/>
            <person name="Oliver K."/>
            <person name="Scott C.E."/>
            <person name="Ainscough R."/>
            <person name="Almeida J.P."/>
            <person name="Ambrose K.D."/>
            <person name="Andrews D.T."/>
            <person name="Ashwell R.I.S."/>
            <person name="Babbage A.K."/>
            <person name="Bagguley C.L."/>
            <person name="Bailey J."/>
            <person name="Bannerjee R."/>
            <person name="Barlow K.F."/>
            <person name="Bates K."/>
            <person name="Beasley H."/>
            <person name="Bird C.P."/>
            <person name="Bray-Allen S."/>
            <person name="Brown A.J."/>
            <person name="Brown J.Y."/>
            <person name="Burrill W."/>
            <person name="Carder C."/>
            <person name="Carter N.P."/>
            <person name="Chapman J.C."/>
            <person name="Clamp M.E."/>
            <person name="Clark S.Y."/>
            <person name="Clarke G."/>
            <person name="Clee C.M."/>
            <person name="Clegg S.C."/>
            <person name="Cobley V."/>
            <person name="Collins J.E."/>
            <person name="Corby N."/>
            <person name="Coville G.J."/>
            <person name="Deloukas P."/>
            <person name="Dhami P."/>
            <person name="Dunham I."/>
            <person name="Dunn M."/>
            <person name="Earthrowl M.E."/>
            <person name="Ellington A.G."/>
            <person name="Faulkner L."/>
            <person name="Frankish A.G."/>
            <person name="Frankland J."/>
            <person name="French L."/>
            <person name="Garner P."/>
            <person name="Garnett J."/>
            <person name="Gilbert J.G.R."/>
            <person name="Gilson C.J."/>
            <person name="Ghori J."/>
            <person name="Grafham D.V."/>
            <person name="Gribble S.M."/>
            <person name="Griffiths C."/>
            <person name="Hall R.E."/>
            <person name="Hammond S."/>
            <person name="Harley J.L."/>
            <person name="Hart E.A."/>
            <person name="Heath P.D."/>
            <person name="Howden P.J."/>
            <person name="Huckle E.J."/>
            <person name="Hunt P.J."/>
            <person name="Hunt A.R."/>
            <person name="Johnson C."/>
            <person name="Johnson D."/>
            <person name="Kay M."/>
            <person name="Kimberley A.M."/>
            <person name="King A."/>
            <person name="Laird G.K."/>
            <person name="Langford C.J."/>
            <person name="Lawlor S."/>
            <person name="Leongamornlert D.A."/>
            <person name="Lloyd D.M."/>
            <person name="Lloyd C."/>
            <person name="Loveland J.E."/>
            <person name="Lovell J."/>
            <person name="Martin S."/>
            <person name="Mashreghi-Mohammadi M."/>
            <person name="McLaren S.J."/>
            <person name="McMurray A."/>
            <person name="Milne S."/>
            <person name="Moore M.J.F."/>
            <person name="Nickerson T."/>
            <person name="Palmer S.A."/>
            <person name="Pearce A.V."/>
            <person name="Peck A.I."/>
            <person name="Pelan S."/>
            <person name="Phillimore B."/>
            <person name="Porter K.M."/>
            <person name="Rice C.M."/>
            <person name="Searle S."/>
            <person name="Sehra H.K."/>
            <person name="Shownkeen R."/>
            <person name="Skuce C.D."/>
            <person name="Smith M."/>
            <person name="Steward C.A."/>
            <person name="Sycamore N."/>
            <person name="Tester J."/>
            <person name="Thomas D.W."/>
            <person name="Tracey A."/>
            <person name="Tromans A."/>
            <person name="Tubby B."/>
            <person name="Wall M."/>
            <person name="Wallis J.M."/>
            <person name="West A.P."/>
            <person name="Whitehead S.L."/>
            <person name="Willey D.L."/>
            <person name="Wilming L."/>
            <person name="Wray P.W."/>
            <person name="Wright M.W."/>
            <person name="Young L."/>
            <person name="Coulson A."/>
            <person name="Durbin R.M."/>
            <person name="Hubbard T."/>
            <person name="Sulston J.E."/>
            <person name="Beck S."/>
            <person name="Bentley D.R."/>
            <person name="Rogers J."/>
            <person name="Ross M.T."/>
        </authorList>
    </citation>
    <scope>NUCLEOTIDE SEQUENCE [LARGE SCALE GENOMIC DNA]</scope>
</reference>
<reference key="6">
    <citation type="submission" date="2005-07" db="EMBL/GenBank/DDBJ databases">
        <authorList>
            <person name="Mural R.J."/>
            <person name="Istrail S."/>
            <person name="Sutton G."/>
            <person name="Florea L."/>
            <person name="Halpern A.L."/>
            <person name="Mobarry C.M."/>
            <person name="Lippert R."/>
            <person name="Walenz B."/>
            <person name="Shatkay H."/>
            <person name="Dew I."/>
            <person name="Miller J.R."/>
            <person name="Flanigan M.J."/>
            <person name="Edwards N.J."/>
            <person name="Bolanos R."/>
            <person name="Fasulo D."/>
            <person name="Halldorsson B.V."/>
            <person name="Hannenhalli S."/>
            <person name="Turner R."/>
            <person name="Yooseph S."/>
            <person name="Lu F."/>
            <person name="Nusskern D.R."/>
            <person name="Shue B.C."/>
            <person name="Zheng X.H."/>
            <person name="Zhong F."/>
            <person name="Delcher A.L."/>
            <person name="Huson D.H."/>
            <person name="Kravitz S.A."/>
            <person name="Mouchard L."/>
            <person name="Reinert K."/>
            <person name="Remington K.A."/>
            <person name="Clark A.G."/>
            <person name="Waterman M.S."/>
            <person name="Eichler E.E."/>
            <person name="Adams M.D."/>
            <person name="Hunkapiller M.W."/>
            <person name="Myers E.W."/>
            <person name="Venter J.C."/>
        </authorList>
    </citation>
    <scope>NUCLEOTIDE SEQUENCE [LARGE SCALE GENOMIC DNA]</scope>
</reference>
<reference key="7">
    <citation type="journal article" date="2004" name="Genome Res.">
        <title>The status, quality, and expansion of the NIH full-length cDNA project: the Mammalian Gene Collection (MGC).</title>
        <authorList>
            <consortium name="The MGC Project Team"/>
        </authorList>
    </citation>
    <scope>NUCLEOTIDE SEQUENCE [LARGE SCALE MRNA]</scope>
    <source>
        <tissue>Urinary bladder</tissue>
    </source>
</reference>
<reference key="8">
    <citation type="journal article" date="2014" name="Am. J. Hum. Genet.">
        <title>Homozygous and compound-heterozygous mutations in TGDS cause Catel-Manzke syndrome.</title>
        <authorList>
            <person name="Ehmke N."/>
            <person name="Caliebe A."/>
            <person name="Koenig R."/>
            <person name="Kant S.G."/>
            <person name="Stark Z."/>
            <person name="Cormier-Daire V."/>
            <person name="Wieczorek D."/>
            <person name="Gillessen-Kaesbach G."/>
            <person name="Hoff K."/>
            <person name="Kawalia A."/>
            <person name="Thiele H."/>
            <person name="Altmueller J."/>
            <person name="Fischer-Zirnsak B."/>
            <person name="Knaus A."/>
            <person name="Zhu N."/>
            <person name="Heinrich V."/>
            <person name="Huber C."/>
            <person name="Harabula I."/>
            <person name="Spielmann M."/>
            <person name="Horn D."/>
            <person name="Kornak U."/>
            <person name="Hecht J."/>
            <person name="Krawitz P.M."/>
            <person name="Nuernberg P."/>
            <person name="Siebert R."/>
            <person name="Manzke H."/>
            <person name="Mundlos S."/>
        </authorList>
    </citation>
    <scope>VARIANTS CATMANS GLY-90; LEU-98; SER-100; HIS-234 AND ASP-298</scope>
</reference>